<evidence type="ECO:0000250" key="1">
    <source>
        <dbReference type="UniProtKB" id="A0SPI1"/>
    </source>
</evidence>
<evidence type="ECO:0000250" key="2">
    <source>
        <dbReference type="UniProtKB" id="P01514"/>
    </source>
</evidence>
<evidence type="ECO:0000250" key="3">
    <source>
        <dbReference type="UniProtKB" id="P17232"/>
    </source>
</evidence>
<evidence type="ECO:0000250" key="4">
    <source>
        <dbReference type="UniProtKB" id="P84914"/>
    </source>
</evidence>
<evidence type="ECO:0000255" key="5"/>
<evidence type="ECO:0000269" key="6">
    <source>
    </source>
</evidence>
<evidence type="ECO:0000303" key="7">
    <source>
    </source>
</evidence>
<evidence type="ECO:0000305" key="8"/>
<evidence type="ECO:0000305" key="9">
    <source>
    </source>
</evidence>
<sequence length="65" mass="6621">MKYNIVFLFAIIASLACLQLTFAAPAASPLANPGASPDAAPNADPLADPFLPIIGKLLSGLLGKK</sequence>
<feature type="signal peptide" evidence="5">
    <location>
        <begin position="1"/>
        <end position="23"/>
    </location>
</feature>
<feature type="propeptide" id="PRO_0000458797" evidence="9">
    <location>
        <begin position="24"/>
        <end position="49"/>
    </location>
</feature>
<feature type="peptide" id="PRO_0000458798" description="Vespid chemotactic peptide VT1" evidence="6">
    <location>
        <begin position="50"/>
        <end position="62"/>
    </location>
</feature>
<feature type="peptide" id="PRO_0000458799" description="Vespid chemotactic peptide VT2" evidence="6">
    <location>
        <begin position="50"/>
        <end position="60"/>
    </location>
</feature>
<feature type="repeat" description="AXPX 1" evidence="1">
    <location>
        <begin position="23"/>
        <end position="26"/>
    </location>
</feature>
<feature type="repeat" description="AXPX 2" evidence="1">
    <location>
        <begin position="27"/>
        <end position="30"/>
    </location>
</feature>
<feature type="repeat" description="AXPX 3" evidence="1">
    <location>
        <begin position="31"/>
        <end position="34"/>
    </location>
</feature>
<feature type="repeat" description="AXPX 4" evidence="1">
    <location>
        <begin position="35"/>
        <end position="38"/>
    </location>
</feature>
<feature type="repeat" description="AXPX 5" evidence="1">
    <location>
        <begin position="39"/>
        <end position="42"/>
    </location>
</feature>
<feature type="repeat" description="AXPX 6" evidence="1">
    <location>
        <begin position="43"/>
        <end position="46"/>
    </location>
</feature>
<feature type="repeat" description="AXPX 7" evidence="1">
    <location>
        <begin position="47"/>
        <end position="50"/>
    </location>
</feature>
<feature type="modified residue" description="Leucine amide" evidence="6">
    <location>
        <position position="62"/>
    </location>
</feature>
<reference key="1">
    <citation type="journal article" date="2013" name="Toxicon">
        <title>Antimicrobial peptides from the venom gland of the social wasp Vespa tropica.</title>
        <authorList>
            <person name="Yang X."/>
            <person name="Wang Y."/>
            <person name="Lee W.H."/>
            <person name="Zhang Y."/>
        </authorList>
    </citation>
    <scope>NUCLEOTIDE SEQUENCE [MRNA]</scope>
    <scope>PROTEIN SEQUENCE OF 50-62</scope>
    <scope>FUNCTION</scope>
    <scope>MASS SPECTROMETRY</scope>
    <scope>AMIDATION AT LEU-62</scope>
    <scope>SUBCELLULAR LOCATION</scope>
    <source>
        <tissue>Venom</tissue>
        <tissue>Venom gland</tissue>
    </source>
</reference>
<proteinExistence type="evidence at protein level"/>
<keyword id="KW-0027">Amidation</keyword>
<keyword id="KW-0044">Antibiotic</keyword>
<keyword id="KW-0929">Antimicrobial</keyword>
<keyword id="KW-0903">Direct protein sequencing</keyword>
<keyword id="KW-0295">Fungicide</keyword>
<keyword id="KW-1213">G-protein coupled receptor impairing toxin</keyword>
<keyword id="KW-0391">Immunity</keyword>
<keyword id="KW-0399">Innate immunity</keyword>
<keyword id="KW-0677">Repeat</keyword>
<keyword id="KW-0964">Secreted</keyword>
<keyword id="KW-0732">Signal</keyword>
<keyword id="KW-0800">Toxin</keyword>
<protein>
    <recommendedName>
        <fullName evidence="7">Vespid chemotactic peptide VT1</fullName>
        <shortName evidence="7">VCP-VT1</shortName>
    </recommendedName>
    <component>
        <recommendedName>
            <fullName evidence="7">Vespid chemotactic peptide VT2</fullName>
            <shortName evidence="7">VCP-VT2</shortName>
        </recommendedName>
    </component>
</protein>
<comment type="function">
    <molecule>Vespid chemotactic peptide VT1</molecule>
    <text evidence="1 2 3 4 6">Antimicrobial peptide with activities against Gram-negative bacteria, Gram-positive bacteria and the fungi C.albicans and C.parapsilosis (PubMed:24012601). Exhibits little hemolytic activity against washed human erythrocytes (PubMed:24012601). Acts as a mast cell degranulating peptide (By similarity). Its mast cell degranulation activity may be related to the activation of G-protein coupled receptors in mast cells as well as interaction with other proteins located in cell endosomal membranes in the mast cells (By similarity). Induces the chemotaxis of neutrophils (By similarity).</text>
</comment>
<comment type="function">
    <molecule>Vespid chemotactic peptide VT2</molecule>
    <text evidence="1 3 6">Antimicrobial peptide with activities against Gram-negative bacteria, Gram-positive bacteria and the fungi C.albicans and C.parapsilosis (PubMed:24012601). Exhibits little hemolytic activity against washed human erythrocytes (PubMed:24012601). Acts as a mast cell degranulating peptide (By similarity). Induces the chemotaxis of neutrophils (By similarity).</text>
</comment>
<comment type="subcellular location">
    <subcellularLocation>
        <location evidence="9">Secreted</location>
    </subcellularLocation>
</comment>
<comment type="tissue specificity">
    <text evidence="9">Expressed by the venom gland.</text>
</comment>
<comment type="mass spectrometry" mass="1384.0" method="MALDI" evidence="6">
    <molecule>Vespid chemotactic peptide VT1</molecule>
    <text>Average mass.</text>
</comment>
<comment type="mass spectrometry" mass="1158.0" method="MALDI" evidence="6">
    <molecule>Vespid chemotactic peptide VT2</molecule>
    <text>Average mass.</text>
</comment>
<comment type="miscellaneous">
    <molecule>Vespid chemotactic peptide VT1</molecule>
    <text evidence="8">The primary structure of this mature peptide is identical to that of Vespid chemotactic peptide 5h from Vespa magnifica (AC A0SPI1) and Vespid chemotactic peptide M from Vespa mandarinia (AC P17232).</text>
</comment>
<comment type="similarity">
    <text evidence="8">Belongs to the MCD family. Crabrolin subfamily.</text>
</comment>
<name>VCP1_VESTR</name>
<dbReference type="GO" id="GO:0005576">
    <property type="term" value="C:extracellular region"/>
    <property type="evidence" value="ECO:0007669"/>
    <property type="project" value="UniProtKB-SubCell"/>
</dbReference>
<dbReference type="GO" id="GO:0090729">
    <property type="term" value="F:toxin activity"/>
    <property type="evidence" value="ECO:0007669"/>
    <property type="project" value="UniProtKB-KW"/>
</dbReference>
<dbReference type="GO" id="GO:0042742">
    <property type="term" value="P:defense response to bacterium"/>
    <property type="evidence" value="ECO:0007669"/>
    <property type="project" value="UniProtKB-KW"/>
</dbReference>
<dbReference type="GO" id="GO:0050832">
    <property type="term" value="P:defense response to fungus"/>
    <property type="evidence" value="ECO:0007669"/>
    <property type="project" value="UniProtKB-KW"/>
</dbReference>
<dbReference type="GO" id="GO:0045087">
    <property type="term" value="P:innate immune response"/>
    <property type="evidence" value="ECO:0007669"/>
    <property type="project" value="UniProtKB-KW"/>
</dbReference>
<dbReference type="GO" id="GO:0031640">
    <property type="term" value="P:killing of cells of another organism"/>
    <property type="evidence" value="ECO:0007669"/>
    <property type="project" value="UniProtKB-KW"/>
</dbReference>
<organism>
    <name type="scientific">Vespa tropica</name>
    <name type="common">Greater banded hornet</name>
    <name type="synonym">Sphex tropica</name>
    <dbReference type="NCBI Taxonomy" id="7450"/>
    <lineage>
        <taxon>Eukaryota</taxon>
        <taxon>Metazoa</taxon>
        <taxon>Ecdysozoa</taxon>
        <taxon>Arthropoda</taxon>
        <taxon>Hexapoda</taxon>
        <taxon>Insecta</taxon>
        <taxon>Pterygota</taxon>
        <taxon>Neoptera</taxon>
        <taxon>Endopterygota</taxon>
        <taxon>Hymenoptera</taxon>
        <taxon>Apocrita</taxon>
        <taxon>Aculeata</taxon>
        <taxon>Vespoidea</taxon>
        <taxon>Vespidae</taxon>
        <taxon>Vespinae</taxon>
        <taxon>Vespa</taxon>
    </lineage>
</organism>
<accession>P0DRA0</accession>